<organism>
    <name type="scientific">Drosophila melanogaster</name>
    <name type="common">Fruit fly</name>
    <dbReference type="NCBI Taxonomy" id="7227"/>
    <lineage>
        <taxon>Eukaryota</taxon>
        <taxon>Metazoa</taxon>
        <taxon>Ecdysozoa</taxon>
        <taxon>Arthropoda</taxon>
        <taxon>Hexapoda</taxon>
        <taxon>Insecta</taxon>
        <taxon>Pterygota</taxon>
        <taxon>Neoptera</taxon>
        <taxon>Endopterygota</taxon>
        <taxon>Diptera</taxon>
        <taxon>Brachycera</taxon>
        <taxon>Muscomorpha</taxon>
        <taxon>Ephydroidea</taxon>
        <taxon>Drosophilidae</taxon>
        <taxon>Drosophila</taxon>
        <taxon>Sophophora</taxon>
    </lineage>
</organism>
<feature type="chain" id="PRO_0000215509" description="Large ribosomal subunit protein eL22">
    <location>
        <begin position="1"/>
        <end position="299"/>
    </location>
</feature>
<feature type="region of interest" description="Disordered" evidence="1">
    <location>
        <begin position="1"/>
        <end position="142"/>
    </location>
</feature>
<feature type="region of interest" description="Disordered" evidence="1">
    <location>
        <begin position="155"/>
        <end position="178"/>
    </location>
</feature>
<feature type="compositionally biased region" description="Basic and acidic residues" evidence="1">
    <location>
        <begin position="33"/>
        <end position="42"/>
    </location>
</feature>
<feature type="compositionally biased region" description="Basic and acidic residues" evidence="1">
    <location>
        <begin position="55"/>
        <end position="64"/>
    </location>
</feature>
<feature type="compositionally biased region" description="Low complexity" evidence="1">
    <location>
        <begin position="65"/>
        <end position="98"/>
    </location>
</feature>
<feature type="compositionally biased region" description="Low complexity" evidence="1">
    <location>
        <begin position="105"/>
        <end position="142"/>
    </location>
</feature>
<feature type="sequence conflict" description="In Ref. 2; AAD19341." evidence="2" ref="2">
    <original>I</original>
    <variation>T</variation>
    <location>
        <position position="242"/>
    </location>
</feature>
<name>RL22_DROME</name>
<sequence>MAPTAKTNKGDTKTAAAKPAEKKAAPAAAAAKGKVEKPKAEAAKPAAAAAKNVKKASEAAKDVKAAAAAAKPAAAKPAAAKPAAASKDAGKKAPAAAAPKKDAKAAAAPAPAKAAPAKKAASTPAAAPPAKKAAPAKAAAPAAAAPAPAAAAPAVAKPAPKPKAKAAPAPSKVVKKNVLRGKGQKKKKVSLRFTIDCTNIAEDSIMDVADFEKYIKARLKVNGKVNNLGNNVTFERSKLKLIVSSDVHFSKAYLKYLTKKYLKKNSLRDWIRVVANEKDSYELRYFRISSNDDEDDDAE</sequence>
<evidence type="ECO:0000256" key="1">
    <source>
        <dbReference type="SAM" id="MobiDB-lite"/>
    </source>
</evidence>
<evidence type="ECO:0000305" key="2"/>
<protein>
    <recommendedName>
        <fullName evidence="2">Large ribosomal subunit protein eL22</fullName>
    </recommendedName>
    <alternativeName>
        <fullName>60S ribosomal protein L22</fullName>
    </alternativeName>
</protein>
<comment type="similarity">
    <text evidence="2">Belongs to the eukaryotic ribosomal protein eL22 family.</text>
</comment>
<comment type="sequence caution" evidence="2">
    <conflict type="erroneous initiation">
        <sequence resource="EMBL-CDS" id="AAD19341"/>
    </conflict>
</comment>
<accession>P50887</accession>
<accession>Q1EC97</accession>
<accession>Q9UAN1</accession>
<accession>Q9V3X9</accession>
<proteinExistence type="evidence at protein level"/>
<keyword id="KW-0002">3D-structure</keyword>
<keyword id="KW-1185">Reference proteome</keyword>
<keyword id="KW-0687">Ribonucleoprotein</keyword>
<keyword id="KW-0689">Ribosomal protein</keyword>
<reference key="1">
    <citation type="submission" date="1996-10" db="EMBL/GenBank/DDBJ databases">
        <authorList>
            <person name="Glover C.V.C."/>
            <person name="Bidwai A.P."/>
            <person name="Zhao W.F."/>
        </authorList>
    </citation>
    <scope>NUCLEOTIDE SEQUENCE [MRNA]</scope>
</reference>
<reference key="2">
    <citation type="journal article" date="1999" name="Gene">
        <title>Poly(ADP-ribose) polymerase interacts with novel Drosophila ribosomal proteins, L22 and L23a, with unique histone-like amino-terminal extensions.</title>
        <authorList>
            <person name="Koyama Y."/>
            <person name="Katagiri S."/>
            <person name="Hanai S."/>
            <person name="Uchida K."/>
            <person name="Miwa M."/>
        </authorList>
    </citation>
    <scope>NUCLEOTIDE SEQUENCE [MRNA]</scope>
</reference>
<reference key="3">
    <citation type="journal article" date="2000" name="Science">
        <title>The genome sequence of Drosophila melanogaster.</title>
        <authorList>
            <person name="Adams M.D."/>
            <person name="Celniker S.E."/>
            <person name="Holt R.A."/>
            <person name="Evans C.A."/>
            <person name="Gocayne J.D."/>
            <person name="Amanatides P.G."/>
            <person name="Scherer S.E."/>
            <person name="Li P.W."/>
            <person name="Hoskins R.A."/>
            <person name="Galle R.F."/>
            <person name="George R.A."/>
            <person name="Lewis S.E."/>
            <person name="Richards S."/>
            <person name="Ashburner M."/>
            <person name="Henderson S.N."/>
            <person name="Sutton G.G."/>
            <person name="Wortman J.R."/>
            <person name="Yandell M.D."/>
            <person name="Zhang Q."/>
            <person name="Chen L.X."/>
            <person name="Brandon R.C."/>
            <person name="Rogers Y.-H.C."/>
            <person name="Blazej R.G."/>
            <person name="Champe M."/>
            <person name="Pfeiffer B.D."/>
            <person name="Wan K.H."/>
            <person name="Doyle C."/>
            <person name="Baxter E.G."/>
            <person name="Helt G."/>
            <person name="Nelson C.R."/>
            <person name="Miklos G.L.G."/>
            <person name="Abril J.F."/>
            <person name="Agbayani A."/>
            <person name="An H.-J."/>
            <person name="Andrews-Pfannkoch C."/>
            <person name="Baldwin D."/>
            <person name="Ballew R.M."/>
            <person name="Basu A."/>
            <person name="Baxendale J."/>
            <person name="Bayraktaroglu L."/>
            <person name="Beasley E.M."/>
            <person name="Beeson K.Y."/>
            <person name="Benos P.V."/>
            <person name="Berman B.P."/>
            <person name="Bhandari D."/>
            <person name="Bolshakov S."/>
            <person name="Borkova D."/>
            <person name="Botchan M.R."/>
            <person name="Bouck J."/>
            <person name="Brokstein P."/>
            <person name="Brottier P."/>
            <person name="Burtis K.C."/>
            <person name="Busam D.A."/>
            <person name="Butler H."/>
            <person name="Cadieu E."/>
            <person name="Center A."/>
            <person name="Chandra I."/>
            <person name="Cherry J.M."/>
            <person name="Cawley S."/>
            <person name="Dahlke C."/>
            <person name="Davenport L.B."/>
            <person name="Davies P."/>
            <person name="de Pablos B."/>
            <person name="Delcher A."/>
            <person name="Deng Z."/>
            <person name="Mays A.D."/>
            <person name="Dew I."/>
            <person name="Dietz S.M."/>
            <person name="Dodson K."/>
            <person name="Doup L.E."/>
            <person name="Downes M."/>
            <person name="Dugan-Rocha S."/>
            <person name="Dunkov B.C."/>
            <person name="Dunn P."/>
            <person name="Durbin K.J."/>
            <person name="Evangelista C.C."/>
            <person name="Ferraz C."/>
            <person name="Ferriera S."/>
            <person name="Fleischmann W."/>
            <person name="Fosler C."/>
            <person name="Gabrielian A.E."/>
            <person name="Garg N.S."/>
            <person name="Gelbart W.M."/>
            <person name="Glasser K."/>
            <person name="Glodek A."/>
            <person name="Gong F."/>
            <person name="Gorrell J.H."/>
            <person name="Gu Z."/>
            <person name="Guan P."/>
            <person name="Harris M."/>
            <person name="Harris N.L."/>
            <person name="Harvey D.A."/>
            <person name="Heiman T.J."/>
            <person name="Hernandez J.R."/>
            <person name="Houck J."/>
            <person name="Hostin D."/>
            <person name="Houston K.A."/>
            <person name="Howland T.J."/>
            <person name="Wei M.-H."/>
            <person name="Ibegwam C."/>
            <person name="Jalali M."/>
            <person name="Kalush F."/>
            <person name="Karpen G.H."/>
            <person name="Ke Z."/>
            <person name="Kennison J.A."/>
            <person name="Ketchum K.A."/>
            <person name="Kimmel B.E."/>
            <person name="Kodira C.D."/>
            <person name="Kraft C.L."/>
            <person name="Kravitz S."/>
            <person name="Kulp D."/>
            <person name="Lai Z."/>
            <person name="Lasko P."/>
            <person name="Lei Y."/>
            <person name="Levitsky A.A."/>
            <person name="Li J.H."/>
            <person name="Li Z."/>
            <person name="Liang Y."/>
            <person name="Lin X."/>
            <person name="Liu X."/>
            <person name="Mattei B."/>
            <person name="McIntosh T.C."/>
            <person name="McLeod M.P."/>
            <person name="McPherson D."/>
            <person name="Merkulov G."/>
            <person name="Milshina N.V."/>
            <person name="Mobarry C."/>
            <person name="Morris J."/>
            <person name="Moshrefi A."/>
            <person name="Mount S.M."/>
            <person name="Moy M."/>
            <person name="Murphy B."/>
            <person name="Murphy L."/>
            <person name="Muzny D.M."/>
            <person name="Nelson D.L."/>
            <person name="Nelson D.R."/>
            <person name="Nelson K.A."/>
            <person name="Nixon K."/>
            <person name="Nusskern D.R."/>
            <person name="Pacleb J.M."/>
            <person name="Palazzolo M."/>
            <person name="Pittman G.S."/>
            <person name="Pan S."/>
            <person name="Pollard J."/>
            <person name="Puri V."/>
            <person name="Reese M.G."/>
            <person name="Reinert K."/>
            <person name="Remington K."/>
            <person name="Saunders R.D.C."/>
            <person name="Scheeler F."/>
            <person name="Shen H."/>
            <person name="Shue B.C."/>
            <person name="Siden-Kiamos I."/>
            <person name="Simpson M."/>
            <person name="Skupski M.P."/>
            <person name="Smith T.J."/>
            <person name="Spier E."/>
            <person name="Spradling A.C."/>
            <person name="Stapleton M."/>
            <person name="Strong R."/>
            <person name="Sun E."/>
            <person name="Svirskas R."/>
            <person name="Tector C."/>
            <person name="Turner R."/>
            <person name="Venter E."/>
            <person name="Wang A.H."/>
            <person name="Wang X."/>
            <person name="Wang Z.-Y."/>
            <person name="Wassarman D.A."/>
            <person name="Weinstock G.M."/>
            <person name="Weissenbach J."/>
            <person name="Williams S.M."/>
            <person name="Woodage T."/>
            <person name="Worley K.C."/>
            <person name="Wu D."/>
            <person name="Yang S."/>
            <person name="Yao Q.A."/>
            <person name="Ye J."/>
            <person name="Yeh R.-F."/>
            <person name="Zaveri J.S."/>
            <person name="Zhan M."/>
            <person name="Zhang G."/>
            <person name="Zhao Q."/>
            <person name="Zheng L."/>
            <person name="Zheng X.H."/>
            <person name="Zhong F.N."/>
            <person name="Zhong W."/>
            <person name="Zhou X."/>
            <person name="Zhu S.C."/>
            <person name="Zhu X."/>
            <person name="Smith H.O."/>
            <person name="Gibbs R.A."/>
            <person name="Myers E.W."/>
            <person name="Rubin G.M."/>
            <person name="Venter J.C."/>
        </authorList>
    </citation>
    <scope>NUCLEOTIDE SEQUENCE [LARGE SCALE GENOMIC DNA]</scope>
    <source>
        <strain>Berkeley</strain>
    </source>
</reference>
<reference key="4">
    <citation type="journal article" date="2002" name="Genome Biol.">
        <title>Annotation of the Drosophila melanogaster euchromatic genome: a systematic review.</title>
        <authorList>
            <person name="Misra S."/>
            <person name="Crosby M.A."/>
            <person name="Mungall C.J."/>
            <person name="Matthews B.B."/>
            <person name="Campbell K.S."/>
            <person name="Hradecky P."/>
            <person name="Huang Y."/>
            <person name="Kaminker J.S."/>
            <person name="Millburn G.H."/>
            <person name="Prochnik S.E."/>
            <person name="Smith C.D."/>
            <person name="Tupy J.L."/>
            <person name="Whitfield E.J."/>
            <person name="Bayraktaroglu L."/>
            <person name="Berman B.P."/>
            <person name="Bettencourt B.R."/>
            <person name="Celniker S.E."/>
            <person name="de Grey A.D.N.J."/>
            <person name="Drysdale R.A."/>
            <person name="Harris N.L."/>
            <person name="Richter J."/>
            <person name="Russo S."/>
            <person name="Schroeder A.J."/>
            <person name="Shu S.Q."/>
            <person name="Stapleton M."/>
            <person name="Yamada C."/>
            <person name="Ashburner M."/>
            <person name="Gelbart W.M."/>
            <person name="Rubin G.M."/>
            <person name="Lewis S.E."/>
        </authorList>
    </citation>
    <scope>GENOME REANNOTATION</scope>
    <source>
        <strain>Berkeley</strain>
    </source>
</reference>
<reference key="5">
    <citation type="journal article" date="2000" name="Science">
        <title>From sequence to chromosome: the tip of the X chromosome of D. melanogaster.</title>
        <authorList>
            <person name="Benos P.V."/>
            <person name="Gatt M.K."/>
            <person name="Ashburner M."/>
            <person name="Murphy L."/>
            <person name="Harris D."/>
            <person name="Barrell B.G."/>
            <person name="Ferraz C."/>
            <person name="Vidal S."/>
            <person name="Brun C."/>
            <person name="Demailles J."/>
            <person name="Cadieu E."/>
            <person name="Dreano S."/>
            <person name="Gloux S."/>
            <person name="Lelaure V."/>
            <person name="Mottier S."/>
            <person name="Galibert F."/>
            <person name="Borkova D."/>
            <person name="Minana B."/>
            <person name="Kafatos F.C."/>
            <person name="Louis C."/>
            <person name="Siden-Kiamos I."/>
            <person name="Bolshakov S."/>
            <person name="Papagiannakis G."/>
            <person name="Spanos L."/>
            <person name="Cox S."/>
            <person name="Madueno E."/>
            <person name="de Pablos B."/>
            <person name="Modolell J."/>
            <person name="Peter A."/>
            <person name="Schoettler P."/>
            <person name="Werner M."/>
            <person name="Mourkioti F."/>
            <person name="Beinert N."/>
            <person name="Dowe G."/>
            <person name="Schaefer U."/>
            <person name="Jaeckle H."/>
            <person name="Bucheton A."/>
            <person name="Callister D.M."/>
            <person name="Campbell L.A."/>
            <person name="Darlamitsou A."/>
            <person name="Henderson N.S."/>
            <person name="McMillan P.J."/>
            <person name="Salles C."/>
            <person name="Tait E.A."/>
            <person name="Valenti P."/>
            <person name="Saunders R.D.C."/>
            <person name="Glover D.M."/>
        </authorList>
    </citation>
    <scope>NUCLEOTIDE SEQUENCE [LARGE SCALE GENOMIC DNA]</scope>
    <source>
        <strain>Oregon-R</strain>
    </source>
</reference>
<reference key="6">
    <citation type="journal article" date="2002" name="Genome Biol.">
        <title>A Drosophila full-length cDNA resource.</title>
        <authorList>
            <person name="Stapleton M."/>
            <person name="Carlson J.W."/>
            <person name="Brokstein P."/>
            <person name="Yu C."/>
            <person name="Champe M."/>
            <person name="George R.A."/>
            <person name="Guarin H."/>
            <person name="Kronmiller B."/>
            <person name="Pacleb J.M."/>
            <person name="Park S."/>
            <person name="Wan K.H."/>
            <person name="Rubin G.M."/>
            <person name="Celniker S.E."/>
        </authorList>
    </citation>
    <scope>NUCLEOTIDE SEQUENCE [LARGE SCALE MRNA]</scope>
    <source>
        <strain>Berkeley</strain>
        <tissue>Embryo</tissue>
    </source>
</reference>
<reference key="7">
    <citation type="submission" date="2006-06" db="EMBL/GenBank/DDBJ databases">
        <authorList>
            <person name="Stapleton M."/>
            <person name="Carlson J.W."/>
            <person name="Chavez C."/>
            <person name="Frise E."/>
            <person name="George R.A."/>
            <person name="Pacleb J.M."/>
            <person name="Park S."/>
            <person name="Wan K.H."/>
            <person name="Yu C."/>
            <person name="Celniker S.E."/>
        </authorList>
    </citation>
    <scope>NUCLEOTIDE SEQUENCE [LARGE SCALE MRNA]</scope>
    <source>
        <strain>Berkeley</strain>
    </source>
</reference>
<reference key="8">
    <citation type="journal article" date="2013" name="Nature">
        <title>Structures of the human and Drosophila 80S ribosome.</title>
        <authorList>
            <person name="Anger A.M."/>
            <person name="Armache J.P."/>
            <person name="Berninghausen O."/>
            <person name="Habeck M."/>
            <person name="Subklewe M."/>
            <person name="Wilson D.N."/>
            <person name="Beckmann R."/>
        </authorList>
    </citation>
    <scope>STRUCTURE BY ELECTRON MICROSCOPY (6.0 ANGSTROMS) OF THE 80S RIBOSOME</scope>
</reference>
<dbReference type="EMBL" id="U42587">
    <property type="protein sequence ID" value="AAB17433.1"/>
    <property type="molecule type" value="mRNA"/>
</dbReference>
<dbReference type="EMBL" id="AF080131">
    <property type="protein sequence ID" value="AAD19341.1"/>
    <property type="status" value="ALT_INIT"/>
    <property type="molecule type" value="mRNA"/>
</dbReference>
<dbReference type="EMBL" id="AE014298">
    <property type="protein sequence ID" value="AAF45546.1"/>
    <property type="molecule type" value="Genomic_DNA"/>
</dbReference>
<dbReference type="EMBL" id="AL132792">
    <property type="protein sequence ID" value="CAB60023.1"/>
    <property type="molecule type" value="Genomic_DNA"/>
</dbReference>
<dbReference type="EMBL" id="AY118961">
    <property type="protein sequence ID" value="AAM50821.1"/>
    <property type="molecule type" value="mRNA"/>
</dbReference>
<dbReference type="EMBL" id="BT025837">
    <property type="protein sequence ID" value="ABF85737.1"/>
    <property type="molecule type" value="mRNA"/>
</dbReference>
<dbReference type="RefSeq" id="NP_477134.1">
    <property type="nucleotide sequence ID" value="NM_057786.5"/>
</dbReference>
<dbReference type="PDB" id="4V6W">
    <property type="method" value="EM"/>
    <property type="resolution" value="6.00 A"/>
    <property type="chains" value="CU=1-299"/>
</dbReference>
<dbReference type="PDB" id="6XU8">
    <property type="method" value="EM"/>
    <property type="resolution" value="3.00 A"/>
    <property type="chains" value="CU=190-288"/>
</dbReference>
<dbReference type="PDBsum" id="4V6W"/>
<dbReference type="PDBsum" id="6XU8"/>
<dbReference type="EMDB" id="EMD-10624"/>
<dbReference type="SMR" id="P50887"/>
<dbReference type="BioGRID" id="57590">
    <property type="interactions" value="139"/>
</dbReference>
<dbReference type="DIP" id="DIP-19124N"/>
<dbReference type="FunCoup" id="P50887">
    <property type="interactions" value="136"/>
</dbReference>
<dbReference type="IntAct" id="P50887">
    <property type="interactions" value="6"/>
</dbReference>
<dbReference type="MINT" id="P50887"/>
<dbReference type="STRING" id="7227.FBpp0070143"/>
<dbReference type="PaxDb" id="7227-FBpp0070143"/>
<dbReference type="DNASU" id="31022"/>
<dbReference type="EnsemblMetazoa" id="FBtr0070148">
    <property type="protein sequence ID" value="FBpp0070143"/>
    <property type="gene ID" value="FBgn0015288"/>
</dbReference>
<dbReference type="GeneID" id="31022"/>
<dbReference type="KEGG" id="dme:Dmel_CG7434"/>
<dbReference type="AGR" id="FB:FBgn0015288"/>
<dbReference type="CTD" id="6146"/>
<dbReference type="FlyBase" id="FBgn0015288">
    <property type="gene designation" value="RpL22"/>
</dbReference>
<dbReference type="VEuPathDB" id="VectorBase:FBgn0015288"/>
<dbReference type="eggNOG" id="KOG3434">
    <property type="taxonomic scope" value="Eukaryota"/>
</dbReference>
<dbReference type="GeneTree" id="ENSGT00940000169435"/>
<dbReference type="HOGENOM" id="CLU_916078_0_0_1"/>
<dbReference type="InParanoid" id="P50887"/>
<dbReference type="OMA" id="AEDHIMD"/>
<dbReference type="OrthoDB" id="10259820at2759"/>
<dbReference type="PhylomeDB" id="P50887"/>
<dbReference type="Reactome" id="R-DME-156827">
    <property type="pathway name" value="L13a-mediated translational silencing of Ceruloplasmin expression"/>
</dbReference>
<dbReference type="Reactome" id="R-DME-1799339">
    <property type="pathway name" value="SRP-dependent cotranslational protein targeting to membrane"/>
</dbReference>
<dbReference type="Reactome" id="R-DME-72689">
    <property type="pathway name" value="Formation of a pool of free 40S subunits"/>
</dbReference>
<dbReference type="Reactome" id="R-DME-72706">
    <property type="pathway name" value="GTP hydrolysis and joining of the 60S ribosomal subunit"/>
</dbReference>
<dbReference type="Reactome" id="R-DME-975956">
    <property type="pathway name" value="Nonsense Mediated Decay (NMD) independent of the Exon Junction Complex (EJC)"/>
</dbReference>
<dbReference type="Reactome" id="R-DME-975957">
    <property type="pathway name" value="Nonsense Mediated Decay (NMD) enhanced by the Exon Junction Complex (EJC)"/>
</dbReference>
<dbReference type="SignaLink" id="P50887"/>
<dbReference type="BioGRID-ORCS" id="31022">
    <property type="hits" value="0 hits in 3 CRISPR screens"/>
</dbReference>
<dbReference type="ChiTaRS" id="RpL22">
    <property type="organism name" value="fly"/>
</dbReference>
<dbReference type="GenomeRNAi" id="31022"/>
<dbReference type="PRO" id="PR:P50887"/>
<dbReference type="Proteomes" id="UP000000803">
    <property type="component" value="Chromosome X"/>
</dbReference>
<dbReference type="Bgee" id="FBgn0015288">
    <property type="expression patterns" value="Expressed in reticular neuropil associated glial cell (Drosophila) in brain and 270 other cell types or tissues"/>
</dbReference>
<dbReference type="GO" id="GO:0022625">
    <property type="term" value="C:cytosolic large ribosomal subunit"/>
    <property type="evidence" value="ECO:0000304"/>
    <property type="project" value="FlyBase"/>
</dbReference>
<dbReference type="GO" id="GO:0022626">
    <property type="term" value="C:cytosolic ribosome"/>
    <property type="evidence" value="ECO:0000314"/>
    <property type="project" value="FlyBase"/>
</dbReference>
<dbReference type="GO" id="GO:0003723">
    <property type="term" value="F:RNA binding"/>
    <property type="evidence" value="ECO:0000318"/>
    <property type="project" value="GO_Central"/>
</dbReference>
<dbReference type="GO" id="GO:0003735">
    <property type="term" value="F:structural constituent of ribosome"/>
    <property type="evidence" value="ECO:0000314"/>
    <property type="project" value="FlyBase"/>
</dbReference>
<dbReference type="GO" id="GO:0002181">
    <property type="term" value="P:cytoplasmic translation"/>
    <property type="evidence" value="ECO:0000318"/>
    <property type="project" value="GO_Central"/>
</dbReference>
<dbReference type="FunFam" id="3.30.1360.210:FF:000001">
    <property type="entry name" value="60S ribosomal protein L22 1"/>
    <property type="match status" value="1"/>
</dbReference>
<dbReference type="Gene3D" id="3.30.1360.210">
    <property type="match status" value="1"/>
</dbReference>
<dbReference type="InterPro" id="IPR002671">
    <property type="entry name" value="Ribosomal_eL22"/>
</dbReference>
<dbReference type="InterPro" id="IPR038526">
    <property type="entry name" value="Ribosomal_eL22_sf"/>
</dbReference>
<dbReference type="PANTHER" id="PTHR10064">
    <property type="entry name" value="60S RIBOSOMAL PROTEIN L22"/>
    <property type="match status" value="1"/>
</dbReference>
<dbReference type="PANTHER" id="PTHR10064:SF0">
    <property type="entry name" value="FI24544P1-RELATED"/>
    <property type="match status" value="1"/>
</dbReference>
<dbReference type="Pfam" id="PF01776">
    <property type="entry name" value="Ribosomal_L22e"/>
    <property type="match status" value="1"/>
</dbReference>
<gene>
    <name type="primary">RpL22</name>
    <name type="ORF">CG7434</name>
</gene>